<gene>
    <name type="primary">YSH1</name>
    <name type="synonym">BRR5</name>
    <name type="ordered locus">YLR277C</name>
</gene>
<proteinExistence type="evidence at protein level"/>
<sequence>MERTNTTTFKFFSLGGSNEVGRSCHILQYKGKTVMLDAGIHPAYQGLASLPFYDEFDLSKVDILLISHFHLDHAASLPYVMQRTNFQGRVFMTHPTKAIYRWLLRDFVRVTSIGSSSSSMGTKDEGLFSDEDLVDSFDKIETVDYHSTVDVNGIKFTAFHAGHVLGAAMFQIEIAGLRVLFTGDYSREVDRHLNSAEVPPLSSNVLIVESTFGTATHEPRLNRERKLTQLIHSTVMRGGRVLLPVFALGRAQEIMLILDEYWSQHADELGGGQVPIFYASNLAKKCMSVFQTYVNMMNDDIRKKFRDSQTNPFIFKNISYLRNLEDFQDFGPSVMLASPGMLQSGLSRDLLERWCPEDKNLVLITGYSIEGTMAKFIMLEPDTIPSINNPEITIPRRCQVEEISFAAHVDFQENLEFIEKISAPNIILVHGEANPMGRLKSALLSNFASLKGTDNEVHVFNPRNCVEVDLEFQGVKVAKAVGNIVNEIYKEENVEIKEEIAAKIEPIKEENEDNLDSQAEKGLVDEEEHKDIVVSGILVSDDKNFELDFLSLSDLREHHPDLSTTILRERQSVRVNCKKELIYWHILQMFGEAEVLQDDDRVTNQEPKVKEESKDNLTNTGKLILQIMGDIKLTIVNTLAVVEWTQDLMNDTVADSIIAILMNVDSAPASVKLSSHSCDDHDHNNVQSNAQGKIDEVERVKQISRLFKEQFGDCFTLFLNKDEYASNKEETITGVVTIGKSTAKIDFNNMKILECNSNPLKGRVESLLNIGGNLVTPLC</sequence>
<evidence type="ECO:0000250" key="1"/>
<evidence type="ECO:0000255" key="2"/>
<evidence type="ECO:0000269" key="3">
    <source>
    </source>
</evidence>
<evidence type="ECO:0000269" key="4">
    <source>
    </source>
</evidence>
<evidence type="ECO:0000269" key="5">
    <source>
    </source>
</evidence>
<evidence type="ECO:0000269" key="6">
    <source>
    </source>
</evidence>
<evidence type="ECO:0000269" key="7">
    <source>
    </source>
</evidence>
<evidence type="ECO:0000269" key="8">
    <source>
    </source>
</evidence>
<evidence type="ECO:0000269" key="9">
    <source>
    </source>
</evidence>
<evidence type="ECO:0000305" key="10"/>
<evidence type="ECO:0007744" key="11">
    <source>
    </source>
</evidence>
<evidence type="ECO:0007829" key="12">
    <source>
        <dbReference type="PDB" id="6I1D"/>
    </source>
</evidence>
<accession>Q06224</accession>
<accession>D6VYS4</accession>
<keyword id="KW-0002">3D-structure</keyword>
<keyword id="KW-0255">Endonuclease</keyword>
<keyword id="KW-0378">Hydrolase</keyword>
<keyword id="KW-0479">Metal-binding</keyword>
<keyword id="KW-0507">mRNA processing</keyword>
<keyword id="KW-0540">Nuclease</keyword>
<keyword id="KW-0539">Nucleus</keyword>
<keyword id="KW-0597">Phosphoprotein</keyword>
<keyword id="KW-1185">Reference proteome</keyword>
<keyword id="KW-0862">Zinc</keyword>
<name>YSH1_YEAST</name>
<organism>
    <name type="scientific">Saccharomyces cerevisiae (strain ATCC 204508 / S288c)</name>
    <name type="common">Baker's yeast</name>
    <dbReference type="NCBI Taxonomy" id="559292"/>
    <lineage>
        <taxon>Eukaryota</taxon>
        <taxon>Fungi</taxon>
        <taxon>Dikarya</taxon>
        <taxon>Ascomycota</taxon>
        <taxon>Saccharomycotina</taxon>
        <taxon>Saccharomycetes</taxon>
        <taxon>Saccharomycetales</taxon>
        <taxon>Saccharomycetaceae</taxon>
        <taxon>Saccharomyces</taxon>
    </lineage>
</organism>
<feature type="chain" id="PRO_0000076368" description="Endoribonuclease YSH1">
    <location>
        <begin position="1"/>
        <end position="779"/>
    </location>
</feature>
<feature type="active site" description="Proton donor" evidence="2">
    <location>
        <position position="408"/>
    </location>
</feature>
<feature type="binding site" evidence="1">
    <location>
        <position position="68"/>
    </location>
    <ligand>
        <name>Zn(2+)</name>
        <dbReference type="ChEBI" id="CHEBI:29105"/>
        <label>1</label>
    </ligand>
</feature>
<feature type="binding site" evidence="1">
    <location>
        <position position="70"/>
    </location>
    <ligand>
        <name>Zn(2+)</name>
        <dbReference type="ChEBI" id="CHEBI:29105"/>
        <label>1</label>
    </ligand>
</feature>
<feature type="binding site" evidence="1">
    <location>
        <position position="72"/>
    </location>
    <ligand>
        <name>Zn(2+)</name>
        <dbReference type="ChEBI" id="CHEBI:29105"/>
        <label>2</label>
    </ligand>
</feature>
<feature type="binding site" evidence="1">
    <location>
        <position position="73"/>
    </location>
    <ligand>
        <name>Zn(2+)</name>
        <dbReference type="ChEBI" id="CHEBI:29105"/>
        <label>2</label>
    </ligand>
</feature>
<feature type="binding site" evidence="1">
    <location>
        <position position="163"/>
    </location>
    <ligand>
        <name>Zn(2+)</name>
        <dbReference type="ChEBI" id="CHEBI:29105"/>
        <label>1</label>
    </ligand>
</feature>
<feature type="binding site" evidence="1">
    <location>
        <position position="184"/>
    </location>
    <ligand>
        <name>Zn(2+)</name>
        <dbReference type="ChEBI" id="CHEBI:29105"/>
        <label>1</label>
    </ligand>
</feature>
<feature type="binding site" evidence="1">
    <location>
        <position position="184"/>
    </location>
    <ligand>
        <name>Zn(2+)</name>
        <dbReference type="ChEBI" id="CHEBI:29105"/>
        <label>2</label>
    </ligand>
</feature>
<feature type="binding site" evidence="1">
    <location>
        <position position="430"/>
    </location>
    <ligand>
        <name>Zn(2+)</name>
        <dbReference type="ChEBI" id="CHEBI:29105"/>
        <label>2</label>
    </ligand>
</feature>
<feature type="modified residue" description="Phosphoserine; by ATM or ATR" evidence="11">
    <location>
        <position position="517"/>
    </location>
</feature>
<feature type="mutagenesis site" description="Loss of endonuclease activity." evidence="8">
    <original>D</original>
    <variation>N</variation>
    <location>
        <position position="37"/>
    </location>
</feature>
<feature type="mutagenesis site" description="Loss of endonuclease activity." evidence="8">
    <original>H</original>
    <variation>F</variation>
    <location>
        <position position="163"/>
    </location>
</feature>
<feature type="mutagenesis site" description="Loss of endonuclease activity." evidence="8">
    <original>D</original>
    <variation>N</variation>
    <location>
        <position position="184"/>
    </location>
</feature>
<feature type="mutagenesis site" description="Loss of endonuclease activity." evidence="8">
    <original>E</original>
    <variation>Q</variation>
    <location>
        <position position="209"/>
    </location>
</feature>
<feature type="mutagenesis site" description="Loss of endonuclease activity." evidence="8">
    <original>H</original>
    <variation>F</variation>
    <location>
        <position position="408"/>
    </location>
</feature>
<feature type="strand" evidence="12">
    <location>
        <begin position="7"/>
        <end position="15"/>
    </location>
</feature>
<feature type="strand" evidence="12">
    <location>
        <begin position="17"/>
        <end position="22"/>
    </location>
</feature>
<feature type="strand" evidence="12">
    <location>
        <begin position="24"/>
        <end position="29"/>
    </location>
</feature>
<feature type="strand" evidence="12">
    <location>
        <begin position="32"/>
        <end position="36"/>
    </location>
</feature>
<feature type="helix" evidence="12">
    <location>
        <begin position="46"/>
        <end position="49"/>
    </location>
</feature>
<feature type="helix" evidence="12">
    <location>
        <begin position="53"/>
        <end position="55"/>
    </location>
</feature>
<feature type="helix" evidence="12">
    <location>
        <begin position="58"/>
        <end position="60"/>
    </location>
</feature>
<feature type="strand" evidence="12">
    <location>
        <begin position="63"/>
        <end position="65"/>
    </location>
</feature>
<feature type="helix" evidence="12">
    <location>
        <begin position="71"/>
        <end position="74"/>
    </location>
</feature>
<feature type="helix" evidence="12">
    <location>
        <begin position="77"/>
        <end position="83"/>
    </location>
</feature>
<feature type="strand" evidence="12">
    <location>
        <begin position="88"/>
        <end position="93"/>
    </location>
</feature>
<feature type="helix" evidence="12">
    <location>
        <begin position="94"/>
        <end position="111"/>
    </location>
</feature>
<feature type="helix" evidence="12">
    <location>
        <begin position="133"/>
        <end position="136"/>
    </location>
</feature>
<feature type="turn" evidence="12">
    <location>
        <begin position="137"/>
        <end position="139"/>
    </location>
</feature>
<feature type="strand" evidence="12">
    <location>
        <begin position="141"/>
        <end position="143"/>
    </location>
</feature>
<feature type="strand" evidence="12">
    <location>
        <begin position="149"/>
        <end position="151"/>
    </location>
</feature>
<feature type="strand" evidence="12">
    <location>
        <begin position="154"/>
        <end position="160"/>
    </location>
</feature>
<feature type="strand" evidence="12">
    <location>
        <begin position="168"/>
        <end position="174"/>
    </location>
</feature>
<feature type="strand" evidence="12">
    <location>
        <begin position="177"/>
        <end position="181"/>
    </location>
</feature>
<feature type="strand" evidence="12">
    <location>
        <begin position="191"/>
        <end position="193"/>
    </location>
</feature>
<feature type="strand" evidence="12">
    <location>
        <begin position="204"/>
        <end position="209"/>
    </location>
</feature>
<feature type="turn" evidence="12">
    <location>
        <begin position="211"/>
        <end position="214"/>
    </location>
</feature>
<feature type="helix" evidence="12">
    <location>
        <begin position="220"/>
        <end position="236"/>
    </location>
</feature>
<feature type="strand" evidence="12">
    <location>
        <begin position="241"/>
        <end position="244"/>
    </location>
</feature>
<feature type="strand" evidence="12">
    <location>
        <begin position="247"/>
        <end position="250"/>
    </location>
</feature>
<feature type="helix" evidence="12">
    <location>
        <begin position="251"/>
        <end position="264"/>
    </location>
</feature>
<feature type="helix" evidence="12">
    <location>
        <begin position="266"/>
        <end position="269"/>
    </location>
</feature>
<feature type="strand" evidence="12">
    <location>
        <begin position="276"/>
        <end position="279"/>
    </location>
</feature>
<feature type="helix" evidence="12">
    <location>
        <begin position="283"/>
        <end position="290"/>
    </location>
</feature>
<feature type="helix" evidence="12">
    <location>
        <begin position="294"/>
        <end position="296"/>
    </location>
</feature>
<feature type="helix" evidence="12">
    <location>
        <begin position="299"/>
        <end position="307"/>
    </location>
</feature>
<feature type="strand" evidence="12">
    <location>
        <begin position="308"/>
        <end position="310"/>
    </location>
</feature>
<feature type="strand" evidence="12">
    <location>
        <begin position="316"/>
        <end position="322"/>
    </location>
</feature>
<feature type="strand" evidence="12">
    <location>
        <begin position="334"/>
        <end position="338"/>
    </location>
</feature>
<feature type="helix" evidence="12">
    <location>
        <begin position="345"/>
        <end position="354"/>
    </location>
</feature>
<feature type="strand" evidence="12">
    <location>
        <begin position="361"/>
        <end position="364"/>
    </location>
</feature>
<feature type="helix" evidence="12">
    <location>
        <begin position="373"/>
        <end position="377"/>
    </location>
</feature>
<feature type="strand" evidence="12">
    <location>
        <begin position="382"/>
        <end position="385"/>
    </location>
</feature>
<feature type="strand" evidence="12">
    <location>
        <begin position="392"/>
        <end position="395"/>
    </location>
</feature>
<feature type="strand" evidence="12">
    <location>
        <begin position="398"/>
        <end position="402"/>
    </location>
</feature>
<feature type="helix" evidence="12">
    <location>
        <begin position="411"/>
        <end position="421"/>
    </location>
</feature>
<feature type="strand" evidence="12">
    <location>
        <begin position="424"/>
        <end position="431"/>
    </location>
</feature>
<feature type="helix" evidence="12">
    <location>
        <begin position="433"/>
        <end position="446"/>
    </location>
</feature>
<feature type="turn" evidence="12">
    <location>
        <begin position="449"/>
        <end position="452"/>
    </location>
</feature>
<feature type="strand" evidence="12">
    <location>
        <begin position="458"/>
        <end position="460"/>
    </location>
</feature>
<feature type="strand" evidence="12">
    <location>
        <begin position="468"/>
        <end position="472"/>
    </location>
</feature>
<dbReference type="EC" id="3.1.27.-"/>
<dbReference type="EMBL" id="U17245">
    <property type="protein sequence ID" value="AAB67367.1"/>
    <property type="molecule type" value="Genomic_DNA"/>
</dbReference>
<dbReference type="EMBL" id="BK006945">
    <property type="protein sequence ID" value="DAA09590.1"/>
    <property type="molecule type" value="Genomic_DNA"/>
</dbReference>
<dbReference type="PIR" id="S51413">
    <property type="entry name" value="S51413"/>
</dbReference>
<dbReference type="RefSeq" id="NP_013379.1">
    <property type="nucleotide sequence ID" value="NM_001182164.1"/>
</dbReference>
<dbReference type="PDB" id="6I1D">
    <property type="method" value="X-ray"/>
    <property type="resolution" value="2.28 A"/>
    <property type="chains" value="A=1-474"/>
</dbReference>
<dbReference type="PDBsum" id="6I1D"/>
<dbReference type="SMR" id="Q06224"/>
<dbReference type="BioGRID" id="31545">
    <property type="interactions" value="42"/>
</dbReference>
<dbReference type="ComplexPortal" id="CPX-1053">
    <property type="entry name" value="Cleavage and polyadenylation specificity factor complex"/>
</dbReference>
<dbReference type="DIP" id="DIP-2470N"/>
<dbReference type="FunCoup" id="Q06224">
    <property type="interactions" value="1146"/>
</dbReference>
<dbReference type="IntAct" id="Q06224">
    <property type="interactions" value="24"/>
</dbReference>
<dbReference type="MINT" id="Q06224"/>
<dbReference type="STRING" id="4932.YLR277C"/>
<dbReference type="iPTMnet" id="Q06224"/>
<dbReference type="PaxDb" id="4932-YLR277C"/>
<dbReference type="PeptideAtlas" id="Q06224"/>
<dbReference type="EnsemblFungi" id="YLR277C_mRNA">
    <property type="protein sequence ID" value="YLR277C"/>
    <property type="gene ID" value="YLR277C"/>
</dbReference>
<dbReference type="GeneID" id="850983"/>
<dbReference type="KEGG" id="sce:YLR277C"/>
<dbReference type="AGR" id="SGD:S000004267"/>
<dbReference type="SGD" id="S000004267">
    <property type="gene designation" value="YSH1"/>
</dbReference>
<dbReference type="VEuPathDB" id="FungiDB:YLR277C"/>
<dbReference type="eggNOG" id="KOG1137">
    <property type="taxonomic scope" value="Eukaryota"/>
</dbReference>
<dbReference type="GeneTree" id="ENSGT00940000155699"/>
<dbReference type="HOGENOM" id="CLU_009673_2_3_1"/>
<dbReference type="InParanoid" id="Q06224"/>
<dbReference type="OMA" id="CKQHITL"/>
<dbReference type="OrthoDB" id="10249535at2759"/>
<dbReference type="BioCyc" id="YEAST:G3O-32376-MONOMER"/>
<dbReference type="Reactome" id="R-SCE-77595">
    <property type="pathway name" value="Processing of Intronless Pre-mRNAs"/>
</dbReference>
<dbReference type="BioGRID-ORCS" id="850983">
    <property type="hits" value="0 hits in 10 CRISPR screens"/>
</dbReference>
<dbReference type="PRO" id="PR:Q06224"/>
<dbReference type="Proteomes" id="UP000002311">
    <property type="component" value="Chromosome XII"/>
</dbReference>
<dbReference type="RNAct" id="Q06224">
    <property type="molecule type" value="protein"/>
</dbReference>
<dbReference type="GO" id="GO:0005847">
    <property type="term" value="C:mRNA cleavage and polyadenylation specificity factor complex"/>
    <property type="evidence" value="ECO:0000314"/>
    <property type="project" value="SGD"/>
</dbReference>
<dbReference type="GO" id="GO:0005634">
    <property type="term" value="C:nucleus"/>
    <property type="evidence" value="ECO:0000303"/>
    <property type="project" value="ComplexPortal"/>
</dbReference>
<dbReference type="GO" id="GO:0004534">
    <property type="term" value="F:5'-3' RNA exonuclease activity"/>
    <property type="evidence" value="ECO:0000318"/>
    <property type="project" value="GO_Central"/>
</dbReference>
<dbReference type="GO" id="GO:0046872">
    <property type="term" value="F:metal ion binding"/>
    <property type="evidence" value="ECO:0007669"/>
    <property type="project" value="UniProtKB-KW"/>
</dbReference>
<dbReference type="GO" id="GO:0003723">
    <property type="term" value="F:RNA binding"/>
    <property type="evidence" value="ECO:0000318"/>
    <property type="project" value="GO_Central"/>
</dbReference>
<dbReference type="GO" id="GO:0004521">
    <property type="term" value="F:RNA endonuclease activity"/>
    <property type="evidence" value="ECO:0000315"/>
    <property type="project" value="SGD"/>
</dbReference>
<dbReference type="GO" id="GO:0006397">
    <property type="term" value="P:mRNA processing"/>
    <property type="evidence" value="ECO:0000315"/>
    <property type="project" value="SGD"/>
</dbReference>
<dbReference type="GO" id="GO:0008380">
    <property type="term" value="P:RNA splicing"/>
    <property type="evidence" value="ECO:0000315"/>
    <property type="project" value="SGD"/>
</dbReference>
<dbReference type="GO" id="GO:0031126">
    <property type="term" value="P:sno(s)RNA 3'-end processing"/>
    <property type="evidence" value="ECO:0000315"/>
    <property type="project" value="SGD"/>
</dbReference>
<dbReference type="GO" id="GO:0034247">
    <property type="term" value="P:snoRNA splicing"/>
    <property type="evidence" value="ECO:0000315"/>
    <property type="project" value="SGD"/>
</dbReference>
<dbReference type="GO" id="GO:0006369">
    <property type="term" value="P:termination of RNA polymerase II transcription"/>
    <property type="evidence" value="ECO:0000315"/>
    <property type="project" value="SGD"/>
</dbReference>
<dbReference type="GO" id="GO:0030846">
    <property type="term" value="P:termination of RNA polymerase II transcription, poly(A)-coupled"/>
    <property type="evidence" value="ECO:0000303"/>
    <property type="project" value="ComplexPortal"/>
</dbReference>
<dbReference type="CDD" id="cd16292">
    <property type="entry name" value="CPSF3-like_MBL-fold"/>
    <property type="match status" value="1"/>
</dbReference>
<dbReference type="FunFam" id="3.60.15.10:FF:000001">
    <property type="entry name" value="Cleavage and polyadenylation specificity factor"/>
    <property type="match status" value="1"/>
</dbReference>
<dbReference type="FunFam" id="3.40.50.10890:FF:000001">
    <property type="entry name" value="Cleavage and polyadenylation specificity factor subunit 3"/>
    <property type="match status" value="1"/>
</dbReference>
<dbReference type="Gene3D" id="3.40.50.10890">
    <property type="match status" value="1"/>
</dbReference>
<dbReference type="Gene3D" id="3.60.15.10">
    <property type="entry name" value="Ribonuclease Z/Hydroxyacylglutathione hydrolase-like"/>
    <property type="match status" value="1"/>
</dbReference>
<dbReference type="InterPro" id="IPR022712">
    <property type="entry name" value="Beta_Casp"/>
</dbReference>
<dbReference type="InterPro" id="IPR021718">
    <property type="entry name" value="CPSF73-100_C"/>
</dbReference>
<dbReference type="InterPro" id="IPR050698">
    <property type="entry name" value="MBL"/>
</dbReference>
<dbReference type="InterPro" id="IPR001279">
    <property type="entry name" value="Metallo-B-lactamas"/>
</dbReference>
<dbReference type="InterPro" id="IPR036866">
    <property type="entry name" value="RibonucZ/Hydroxyglut_hydro"/>
</dbReference>
<dbReference type="InterPro" id="IPR011108">
    <property type="entry name" value="RMMBL"/>
</dbReference>
<dbReference type="PANTHER" id="PTHR11203">
    <property type="entry name" value="CLEAVAGE AND POLYADENYLATION SPECIFICITY FACTOR FAMILY MEMBER"/>
    <property type="match status" value="1"/>
</dbReference>
<dbReference type="PANTHER" id="PTHR11203:SF11">
    <property type="entry name" value="CLEAVAGE AND POLYADENYLATION SPECIFICITY FACTOR SUBUNIT 3"/>
    <property type="match status" value="1"/>
</dbReference>
<dbReference type="Pfam" id="PF10996">
    <property type="entry name" value="Beta-Casp"/>
    <property type="match status" value="1"/>
</dbReference>
<dbReference type="Pfam" id="PF11718">
    <property type="entry name" value="CPSF73-100_C"/>
    <property type="match status" value="1"/>
</dbReference>
<dbReference type="Pfam" id="PF00753">
    <property type="entry name" value="Lactamase_B"/>
    <property type="match status" value="1"/>
</dbReference>
<dbReference type="Pfam" id="PF07521">
    <property type="entry name" value="RMMBL"/>
    <property type="match status" value="1"/>
</dbReference>
<dbReference type="SMART" id="SM01027">
    <property type="entry name" value="Beta-Casp"/>
    <property type="match status" value="1"/>
</dbReference>
<dbReference type="SMART" id="SM01098">
    <property type="entry name" value="CPSF73-100_C"/>
    <property type="match status" value="1"/>
</dbReference>
<dbReference type="SMART" id="SM00849">
    <property type="entry name" value="Lactamase_B"/>
    <property type="match status" value="1"/>
</dbReference>
<dbReference type="SUPFAM" id="SSF56281">
    <property type="entry name" value="Metallo-hydrolase/oxidoreductase"/>
    <property type="match status" value="1"/>
</dbReference>
<comment type="function">
    <text evidence="8">Component of the cleavage and polyadenylation factor (CPF) complex, which plays a key role in polyadenylation-dependent pre-mRNA 3'-end formation and cooperates with cleavage factors including the CFIA complex and NAB4/CFIB. Has endonuclease activity.</text>
</comment>
<comment type="cofactor">
    <cofactor evidence="1">
        <name>Zn(2+)</name>
        <dbReference type="ChEBI" id="CHEBI:29105"/>
    </cofactor>
    <text evidence="1">Binds 2 Zn(2+) ions per subunit.</text>
</comment>
<comment type="subunit">
    <text evidence="3 4 5 9">Component of the cleavage and polyadenylation factor (CPF) complex, which is composed of at least PTI1, SYC1, SSU72, GLC7, MPE1, REF2, PFS2, PTA1, YSH1/BRR5, SWD2, CFT2/YDH1, YTH1, CFT1/YHH1, FIP1 and PAP1. Interacts with FIP1, PFS2, RNA14 and YTH1.</text>
</comment>
<comment type="interaction">
    <interactant intactId="EBI-38345">
        <id>Q06224</id>
    </interactant>
    <interactant intactId="EBI-14145">
        <id>Q01329</id>
        <label>PTA1</label>
    </interactant>
    <organismsDiffer>false</organismsDiffer>
    <experiments>5</experiments>
</comment>
<comment type="interaction">
    <interactant intactId="EBI-38345">
        <id>Q06224</id>
    </interactant>
    <interactant intactId="EBI-38049">
        <id>Q06102</id>
        <label>YTH1</label>
    </interactant>
    <organismsDiffer>false</organismsDiffer>
    <experiments>5</experiments>
</comment>
<comment type="subcellular location">
    <subcellularLocation>
        <location evidence="5 6">Nucleus</location>
    </subcellularLocation>
</comment>
<comment type="miscellaneous">
    <text evidence="7">Present with 17400 molecules/cell in log phase SD medium.</text>
</comment>
<comment type="similarity">
    <text evidence="10">Belongs to the metallo-beta-lactamase superfamily. RNA-metabolizing metallo-beta-lactamase-like family. CPSF2/YSH1 subfamily.</text>
</comment>
<reference key="1">
    <citation type="journal article" date="1997" name="Nature">
        <title>The nucleotide sequence of Saccharomyces cerevisiae chromosome XII.</title>
        <authorList>
            <person name="Johnston M."/>
            <person name="Hillier L.W."/>
            <person name="Riles L."/>
            <person name="Albermann K."/>
            <person name="Andre B."/>
            <person name="Ansorge W."/>
            <person name="Benes V."/>
            <person name="Brueckner M."/>
            <person name="Delius H."/>
            <person name="Dubois E."/>
            <person name="Duesterhoeft A."/>
            <person name="Entian K.-D."/>
            <person name="Floeth M."/>
            <person name="Goffeau A."/>
            <person name="Hebling U."/>
            <person name="Heumann K."/>
            <person name="Heuss-Neitzel D."/>
            <person name="Hilbert H."/>
            <person name="Hilger F."/>
            <person name="Kleine K."/>
            <person name="Koetter P."/>
            <person name="Louis E.J."/>
            <person name="Messenguy F."/>
            <person name="Mewes H.-W."/>
            <person name="Miosga T."/>
            <person name="Moestl D."/>
            <person name="Mueller-Auer S."/>
            <person name="Nentwich U."/>
            <person name="Obermaier B."/>
            <person name="Piravandi E."/>
            <person name="Pohl T.M."/>
            <person name="Portetelle D."/>
            <person name="Purnelle B."/>
            <person name="Rechmann S."/>
            <person name="Rieger M."/>
            <person name="Rinke M."/>
            <person name="Rose M."/>
            <person name="Scharfe M."/>
            <person name="Scherens B."/>
            <person name="Scholler P."/>
            <person name="Schwager C."/>
            <person name="Schwarz S."/>
            <person name="Underwood A.P."/>
            <person name="Urrestarazu L.A."/>
            <person name="Vandenbol M."/>
            <person name="Verhasselt P."/>
            <person name="Vierendeels F."/>
            <person name="Voet M."/>
            <person name="Volckaert G."/>
            <person name="Voss H."/>
            <person name="Wambutt R."/>
            <person name="Wedler E."/>
            <person name="Wedler H."/>
            <person name="Zimmermann F.K."/>
            <person name="Zollner A."/>
            <person name="Hani J."/>
            <person name="Hoheisel J.D."/>
        </authorList>
    </citation>
    <scope>NUCLEOTIDE SEQUENCE [LARGE SCALE GENOMIC DNA]</scope>
    <source>
        <strain>ATCC 204508 / S288c</strain>
    </source>
</reference>
<reference key="2">
    <citation type="journal article" date="2014" name="G3 (Bethesda)">
        <title>The reference genome sequence of Saccharomyces cerevisiae: Then and now.</title>
        <authorList>
            <person name="Engel S.R."/>
            <person name="Dietrich F.S."/>
            <person name="Fisk D.G."/>
            <person name="Binkley G."/>
            <person name="Balakrishnan R."/>
            <person name="Costanzo M.C."/>
            <person name="Dwight S.S."/>
            <person name="Hitz B.C."/>
            <person name="Karra K."/>
            <person name="Nash R.S."/>
            <person name="Weng S."/>
            <person name="Wong E.D."/>
            <person name="Lloyd P."/>
            <person name="Skrzypek M.S."/>
            <person name="Miyasato S.R."/>
            <person name="Simison M."/>
            <person name="Cherry J.M."/>
        </authorList>
    </citation>
    <scope>GENOME REANNOTATION</scope>
    <source>
        <strain>ATCC 204508 / S288c</strain>
    </source>
</reference>
<reference key="3">
    <citation type="journal article" date="1996" name="Science">
        <title>Sequence similarity between the 73-kilodalton protein of mammalian CPSF and a subunit of yeast polyadenylation factor I.</title>
        <authorList>
            <person name="Jenny A."/>
            <person name="Minvielle-Sebastia L."/>
            <person name="Preker P.J."/>
            <person name="Keller W."/>
        </authorList>
    </citation>
    <scope>IDENTIFICATION IN THE CPF COMPLEX</scope>
</reference>
<reference key="4">
    <citation type="journal article" date="2000" name="EMBO J.">
        <title>The WD-repeat protein pfs2p bridges two essential factors within the yeast pre-mRNA 3'-end-processing complex.</title>
        <authorList>
            <person name="Ohnacker M."/>
            <person name="Barabino S.M.L."/>
            <person name="Preker P.J."/>
            <person name="Keller W."/>
        </authorList>
    </citation>
    <scope>INTERACTION WITH FIP1; PFS2 AND RNA14</scope>
</reference>
<reference key="5">
    <citation type="journal article" date="2003" name="J. Biol. Chem.">
        <title>Organization and function of APT, a subcomplex of the yeast cleavage and polyadenylation factor involved in the formation of mRNA and small nucleolar RNA 3'-ends.</title>
        <authorList>
            <person name="Nedea E."/>
            <person name="He X."/>
            <person name="Kim M."/>
            <person name="Pootoolal J."/>
            <person name="Zhong G."/>
            <person name="Canadien V."/>
            <person name="Hughes T."/>
            <person name="Buratowski S."/>
            <person name="Moore C.L."/>
            <person name="Greenblatt J."/>
        </authorList>
    </citation>
    <scope>IDENTIFICATION IN THE CPF COMPLEX</scope>
    <scope>SUBCELLULAR LOCATION</scope>
    <scope>IDENTIFICATION BY MASS SPECTROMETRY</scope>
</reference>
<reference key="6">
    <citation type="journal article" date="2003" name="Nature">
        <title>Global analysis of protein localization in budding yeast.</title>
        <authorList>
            <person name="Huh W.-K."/>
            <person name="Falvo J.V."/>
            <person name="Gerke L.C."/>
            <person name="Carroll A.S."/>
            <person name="Howson R.W."/>
            <person name="Weissman J.S."/>
            <person name="O'Shea E.K."/>
        </authorList>
    </citation>
    <scope>SUBCELLULAR LOCATION [LARGE SCALE ANALYSIS]</scope>
</reference>
<reference key="7">
    <citation type="journal article" date="2003" name="Nature">
        <title>Global analysis of protein expression in yeast.</title>
        <authorList>
            <person name="Ghaemmaghami S."/>
            <person name="Huh W.-K."/>
            <person name="Bower K."/>
            <person name="Howson R.W."/>
            <person name="Belle A."/>
            <person name="Dephoure N."/>
            <person name="O'Shea E.K."/>
            <person name="Weissman J.S."/>
        </authorList>
    </citation>
    <scope>LEVEL OF PROTEIN EXPRESSION [LARGE SCALE ANALYSIS]</scope>
</reference>
<reference key="8">
    <citation type="journal article" date="2003" name="Nucleic Acids Res.">
        <title>Functional dissection of the zinc finger and flanking domains of the Yth1 cleavage/polyadenylation factor.</title>
        <authorList>
            <person name="Tacahashi Y."/>
            <person name="Helmling S."/>
            <person name="Moore C.L."/>
        </authorList>
    </citation>
    <scope>INTERACTION WITH YTH1</scope>
</reference>
<reference key="9">
    <citation type="journal article" date="2004" name="RNA">
        <title>Evidence that polyadenylation factor CPSF-73 is the mRNA 3' processing endonuclease.</title>
        <authorList>
            <person name="Ryan K."/>
            <person name="Calvo O."/>
            <person name="Manley J.L."/>
        </authorList>
    </citation>
    <scope>FUNCTION</scope>
    <scope>ZINC-BINDING</scope>
    <scope>MUTAGENESIS OF ASP-37; HIS-163; ASP-184; GLU-209 AND HIS-408</scope>
</reference>
<reference key="10">
    <citation type="journal article" date="2008" name="Mol. Cell. Proteomics">
        <title>A multidimensional chromatography technology for in-depth phosphoproteome analysis.</title>
        <authorList>
            <person name="Albuquerque C.P."/>
            <person name="Smolka M.B."/>
            <person name="Payne S.H."/>
            <person name="Bafna V."/>
            <person name="Eng J."/>
            <person name="Zhou H."/>
        </authorList>
    </citation>
    <scope>PHOSPHORYLATION [LARGE SCALE ANALYSIS] AT SER-517</scope>
    <scope>IDENTIFICATION BY MASS SPECTROMETRY [LARGE SCALE ANALYSIS]</scope>
</reference>
<protein>
    <recommendedName>
        <fullName>Endoribonuclease YSH1</fullName>
        <ecNumber>3.1.27.-</ecNumber>
    </recommendedName>
    <alternativeName>
        <fullName>Yeast 73 kDa homolog 1</fullName>
    </alternativeName>
    <alternativeName>
        <fullName>mRNA 3'-end-processing protein YSH1</fullName>
    </alternativeName>
</protein>